<organism>
    <name type="scientific">Leuconostoc mesenteroides subsp. mesenteroides (strain ATCC 8293 / DSM 20343 / BCRC 11652 / CCM 1803 / JCM 6124 / NCDO 523 / NBRC 100496 / NCIMB 8023 / NCTC 12954 / NRRL B-1118 / 37Y)</name>
    <dbReference type="NCBI Taxonomy" id="203120"/>
    <lineage>
        <taxon>Bacteria</taxon>
        <taxon>Bacillati</taxon>
        <taxon>Bacillota</taxon>
        <taxon>Bacilli</taxon>
        <taxon>Lactobacillales</taxon>
        <taxon>Lactobacillaceae</taxon>
        <taxon>Leuconostoc</taxon>
    </lineage>
</organism>
<sequence length="66" mass="7263">MAKDAITGARTRFGNQRSHALNSSRRSWKPNLQKVTVKINGAAPKKVYLTARTLKAGLKNGSIERV</sequence>
<accession>Q03W24</accession>
<comment type="similarity">
    <text evidence="1">Belongs to the bacterial ribosomal protein bL28 family.</text>
</comment>
<feature type="chain" id="PRO_1000059953" description="Large ribosomal subunit protein bL28">
    <location>
        <begin position="1"/>
        <end position="66"/>
    </location>
</feature>
<feature type="region of interest" description="Disordered" evidence="2">
    <location>
        <begin position="1"/>
        <end position="26"/>
    </location>
</feature>
<feature type="compositionally biased region" description="Polar residues" evidence="2">
    <location>
        <begin position="13"/>
        <end position="25"/>
    </location>
</feature>
<evidence type="ECO:0000255" key="1">
    <source>
        <dbReference type="HAMAP-Rule" id="MF_00373"/>
    </source>
</evidence>
<evidence type="ECO:0000256" key="2">
    <source>
        <dbReference type="SAM" id="MobiDB-lite"/>
    </source>
</evidence>
<evidence type="ECO:0000305" key="3"/>
<dbReference type="EMBL" id="CP000414">
    <property type="protein sequence ID" value="ABJ62598.1"/>
    <property type="molecule type" value="Genomic_DNA"/>
</dbReference>
<dbReference type="RefSeq" id="WP_002815208.1">
    <property type="nucleotide sequence ID" value="NC_008531.1"/>
</dbReference>
<dbReference type="SMR" id="Q03W24"/>
<dbReference type="EnsemblBacteria" id="ABJ62598">
    <property type="protein sequence ID" value="ABJ62598"/>
    <property type="gene ID" value="LEUM_1506"/>
</dbReference>
<dbReference type="GeneID" id="97503526"/>
<dbReference type="KEGG" id="lme:LEUM_1506"/>
<dbReference type="eggNOG" id="COG0227">
    <property type="taxonomic scope" value="Bacteria"/>
</dbReference>
<dbReference type="HOGENOM" id="CLU_064548_7_1_9"/>
<dbReference type="Proteomes" id="UP000000362">
    <property type="component" value="Chromosome"/>
</dbReference>
<dbReference type="GO" id="GO:1990904">
    <property type="term" value="C:ribonucleoprotein complex"/>
    <property type="evidence" value="ECO:0007669"/>
    <property type="project" value="UniProtKB-KW"/>
</dbReference>
<dbReference type="GO" id="GO:0005840">
    <property type="term" value="C:ribosome"/>
    <property type="evidence" value="ECO:0007669"/>
    <property type="project" value="UniProtKB-KW"/>
</dbReference>
<dbReference type="GO" id="GO:0003735">
    <property type="term" value="F:structural constituent of ribosome"/>
    <property type="evidence" value="ECO:0007669"/>
    <property type="project" value="InterPro"/>
</dbReference>
<dbReference type="GO" id="GO:0006412">
    <property type="term" value="P:translation"/>
    <property type="evidence" value="ECO:0007669"/>
    <property type="project" value="UniProtKB-UniRule"/>
</dbReference>
<dbReference type="Gene3D" id="2.30.170.40">
    <property type="entry name" value="Ribosomal protein L28/L24"/>
    <property type="match status" value="1"/>
</dbReference>
<dbReference type="HAMAP" id="MF_00373">
    <property type="entry name" value="Ribosomal_bL28"/>
    <property type="match status" value="1"/>
</dbReference>
<dbReference type="InterPro" id="IPR050096">
    <property type="entry name" value="Bacterial_rp_bL28"/>
</dbReference>
<dbReference type="InterPro" id="IPR026569">
    <property type="entry name" value="Ribosomal_bL28"/>
</dbReference>
<dbReference type="InterPro" id="IPR034704">
    <property type="entry name" value="Ribosomal_bL28/bL31-like_sf"/>
</dbReference>
<dbReference type="InterPro" id="IPR001383">
    <property type="entry name" value="Ribosomal_bL28_bact-type"/>
</dbReference>
<dbReference type="InterPro" id="IPR037147">
    <property type="entry name" value="Ribosomal_bL28_sf"/>
</dbReference>
<dbReference type="NCBIfam" id="TIGR00009">
    <property type="entry name" value="L28"/>
    <property type="match status" value="1"/>
</dbReference>
<dbReference type="PANTHER" id="PTHR39080">
    <property type="entry name" value="50S RIBOSOMAL PROTEIN L28"/>
    <property type="match status" value="1"/>
</dbReference>
<dbReference type="PANTHER" id="PTHR39080:SF1">
    <property type="entry name" value="LARGE RIBOSOMAL SUBUNIT PROTEIN BL28A"/>
    <property type="match status" value="1"/>
</dbReference>
<dbReference type="Pfam" id="PF00830">
    <property type="entry name" value="Ribosomal_L28"/>
    <property type="match status" value="1"/>
</dbReference>
<dbReference type="SUPFAM" id="SSF143800">
    <property type="entry name" value="L28p-like"/>
    <property type="match status" value="1"/>
</dbReference>
<name>RL28_LEUMM</name>
<protein>
    <recommendedName>
        <fullName evidence="1">Large ribosomal subunit protein bL28</fullName>
    </recommendedName>
    <alternativeName>
        <fullName evidence="3">50S ribosomal protein L28</fullName>
    </alternativeName>
</protein>
<proteinExistence type="inferred from homology"/>
<gene>
    <name evidence="1" type="primary">rpmB</name>
    <name type="ordered locus">LEUM_1506</name>
</gene>
<reference key="1">
    <citation type="journal article" date="2006" name="Proc. Natl. Acad. Sci. U.S.A.">
        <title>Comparative genomics of the lactic acid bacteria.</title>
        <authorList>
            <person name="Makarova K.S."/>
            <person name="Slesarev A."/>
            <person name="Wolf Y.I."/>
            <person name="Sorokin A."/>
            <person name="Mirkin B."/>
            <person name="Koonin E.V."/>
            <person name="Pavlov A."/>
            <person name="Pavlova N."/>
            <person name="Karamychev V."/>
            <person name="Polouchine N."/>
            <person name="Shakhova V."/>
            <person name="Grigoriev I."/>
            <person name="Lou Y."/>
            <person name="Rohksar D."/>
            <person name="Lucas S."/>
            <person name="Huang K."/>
            <person name="Goodstein D.M."/>
            <person name="Hawkins T."/>
            <person name="Plengvidhya V."/>
            <person name="Welker D."/>
            <person name="Hughes J."/>
            <person name="Goh Y."/>
            <person name="Benson A."/>
            <person name="Baldwin K."/>
            <person name="Lee J.-H."/>
            <person name="Diaz-Muniz I."/>
            <person name="Dosti B."/>
            <person name="Smeianov V."/>
            <person name="Wechter W."/>
            <person name="Barabote R."/>
            <person name="Lorca G."/>
            <person name="Altermann E."/>
            <person name="Barrangou R."/>
            <person name="Ganesan B."/>
            <person name="Xie Y."/>
            <person name="Rawsthorne H."/>
            <person name="Tamir D."/>
            <person name="Parker C."/>
            <person name="Breidt F."/>
            <person name="Broadbent J.R."/>
            <person name="Hutkins R."/>
            <person name="O'Sullivan D."/>
            <person name="Steele J."/>
            <person name="Unlu G."/>
            <person name="Saier M.H. Jr."/>
            <person name="Klaenhammer T."/>
            <person name="Richardson P."/>
            <person name="Kozyavkin S."/>
            <person name="Weimer B.C."/>
            <person name="Mills D.A."/>
        </authorList>
    </citation>
    <scope>NUCLEOTIDE SEQUENCE [LARGE SCALE GENOMIC DNA]</scope>
    <source>
        <strain>ATCC 8293 / DSM 20343 / BCRC 11652 / CCM 1803 / JCM 6124 / NCDO 523 / NBRC 100496 / NCIMB 8023 / NCTC 12954 / NRRL B-1118 / 37Y</strain>
    </source>
</reference>
<keyword id="KW-1185">Reference proteome</keyword>
<keyword id="KW-0687">Ribonucleoprotein</keyword>
<keyword id="KW-0689">Ribosomal protein</keyword>